<protein>
    <recommendedName>
        <fullName>Protein phosphatase methylesterase 1</fullName>
        <shortName>PME-1</shortName>
        <ecNumber>3.1.1.89</ecNumber>
    </recommendedName>
</protein>
<proteinExistence type="evidence at transcript level"/>
<name>PPME1_BOVIN</name>
<keyword id="KW-0378">Hydrolase</keyword>
<keyword id="KW-0488">Methylation</keyword>
<keyword id="KW-0597">Phosphoprotein</keyword>
<keyword id="KW-1185">Reference proteome</keyword>
<keyword id="KW-0719">Serine esterase</keyword>
<feature type="chain" id="PRO_0000090389" description="Protein phosphatase methylesterase 1">
    <location>
        <begin position="1"/>
        <end position="380"/>
    </location>
</feature>
<feature type="region of interest" description="Disordered" evidence="4">
    <location>
        <begin position="1"/>
        <end position="38"/>
    </location>
</feature>
<feature type="region of interest" description="Disordered" evidence="4">
    <location>
        <begin position="255"/>
        <end position="280"/>
    </location>
</feature>
<feature type="compositionally biased region" description="Acidic residues" evidence="4">
    <location>
        <begin position="255"/>
        <end position="265"/>
    </location>
</feature>
<feature type="compositionally biased region" description="Basic and acidic residues" evidence="4">
    <location>
        <begin position="268"/>
        <end position="280"/>
    </location>
</feature>
<feature type="active site" evidence="1">
    <location>
        <position position="156"/>
    </location>
</feature>
<feature type="active site" evidence="1">
    <location>
        <position position="181"/>
    </location>
</feature>
<feature type="active site" evidence="1">
    <location>
        <position position="349"/>
    </location>
</feature>
<feature type="modified residue" description="Phosphoserine" evidence="3">
    <location>
        <position position="15"/>
    </location>
</feature>
<feature type="modified residue" description="Asymmetric dimethylarginine; alternate" evidence="2">
    <location>
        <position position="16"/>
    </location>
</feature>
<feature type="modified residue" description="Omega-N-methylarginine; alternate" evidence="3">
    <location>
        <position position="16"/>
    </location>
</feature>
<feature type="modified residue" description="Phosphoserine" evidence="3">
    <location>
        <position position="42"/>
    </location>
</feature>
<organism>
    <name type="scientific">Bos taurus</name>
    <name type="common">Bovine</name>
    <dbReference type="NCBI Taxonomy" id="9913"/>
    <lineage>
        <taxon>Eukaryota</taxon>
        <taxon>Metazoa</taxon>
        <taxon>Chordata</taxon>
        <taxon>Craniata</taxon>
        <taxon>Vertebrata</taxon>
        <taxon>Euteleostomi</taxon>
        <taxon>Mammalia</taxon>
        <taxon>Eutheria</taxon>
        <taxon>Laurasiatheria</taxon>
        <taxon>Artiodactyla</taxon>
        <taxon>Ruminantia</taxon>
        <taxon>Pecora</taxon>
        <taxon>Bovidae</taxon>
        <taxon>Bovinae</taxon>
        <taxon>Bos</taxon>
    </lineage>
</organism>
<gene>
    <name type="primary">PPME1</name>
    <name type="synonym">PME1</name>
</gene>
<reference key="1">
    <citation type="journal article" date="2005" name="BMC Genomics">
        <title>Characterization of 954 bovine full-CDS cDNA sequences.</title>
        <authorList>
            <person name="Harhay G.P."/>
            <person name="Sonstegard T.S."/>
            <person name="Keele J.W."/>
            <person name="Heaton M.P."/>
            <person name="Clawson M.L."/>
            <person name="Snelling W.M."/>
            <person name="Wiedmann R.T."/>
            <person name="Van Tassell C.P."/>
            <person name="Smith T.P.L."/>
        </authorList>
    </citation>
    <scope>NUCLEOTIDE SEQUENCE [LARGE SCALE MRNA]</scope>
</reference>
<reference key="2">
    <citation type="submission" date="2005-11" db="EMBL/GenBank/DDBJ databases">
        <authorList>
            <consortium name="NIH - Mammalian Gene Collection (MGC) project"/>
        </authorList>
    </citation>
    <scope>NUCLEOTIDE SEQUENCE [LARGE SCALE MRNA]</scope>
    <source>
        <strain>Crossbred X Angus</strain>
        <tissue>Liver</tissue>
    </source>
</reference>
<sequence>MSALEKSMHLGRLPSRPPLPGSGGSQSGAKMRMGPGRKRDFSPVPWSQYFESMEDVEVENETGKDTFRVYKSGSEGPVLLLLHGGGHSALSWAVFTAAIISRVQCRIVALDLRGHGETKVRNSEDLSAETMAKDVGNVVEAMYGDLPPPIMLIGHSMGGAIAVHTASSNLVPSLLGLCMIDVVEGTAMDALNSMQNFLRGRPKTFKSLENAIEWSVKSGQIRNLESARVSMVGQVKQCEGITSPEGSKSIVEGIIEEEEEDEEGSESVNKRKKEDDMETKKDHPYTWRIELAKTEKYWDGWFRGLSNLFLSCPIPKLLLLAGVDRLDKDLTIGQMQGKFQMQVLPQCGHAVHEDAPDKVAEAVATFLIRHRFAEPIGGFQ</sequence>
<accession>Q58DN4</accession>
<dbReference type="EC" id="3.1.1.89"/>
<dbReference type="EMBL" id="BT021563">
    <property type="protein sequence ID" value="AAX46410.1"/>
    <property type="molecule type" value="mRNA"/>
</dbReference>
<dbReference type="EMBL" id="BC110227">
    <property type="protein sequence ID" value="AAI10228.1"/>
    <property type="molecule type" value="mRNA"/>
</dbReference>
<dbReference type="RefSeq" id="NP_001069524.1">
    <property type="nucleotide sequence ID" value="NM_001076056.2"/>
</dbReference>
<dbReference type="SMR" id="Q58DN4"/>
<dbReference type="FunCoup" id="Q58DN4">
    <property type="interactions" value="4837"/>
</dbReference>
<dbReference type="STRING" id="9913.ENSBTAP00000039548"/>
<dbReference type="ESTHER" id="bovin-ppme1">
    <property type="family name" value="PPase_methylesterase_euk"/>
</dbReference>
<dbReference type="PaxDb" id="9913-ENSBTAP00000039548"/>
<dbReference type="Ensembl" id="ENSBTAT00000039760.6">
    <property type="protein sequence ID" value="ENSBTAP00000039548.4"/>
    <property type="gene ID" value="ENSBTAG00000027612.6"/>
</dbReference>
<dbReference type="GeneID" id="535390"/>
<dbReference type="KEGG" id="bta:535390"/>
<dbReference type="CTD" id="51400"/>
<dbReference type="VEuPathDB" id="HostDB:ENSBTAG00000027612"/>
<dbReference type="VGNC" id="VGNC:33218">
    <property type="gene designation" value="PPME1"/>
</dbReference>
<dbReference type="eggNOG" id="KOG2564">
    <property type="taxonomic scope" value="Eukaryota"/>
</dbReference>
<dbReference type="GeneTree" id="ENSGT00390000004396"/>
<dbReference type="HOGENOM" id="CLU_024818_0_1_1"/>
<dbReference type="InParanoid" id="Q58DN4"/>
<dbReference type="OMA" id="VMVCHHG"/>
<dbReference type="OrthoDB" id="194865at2759"/>
<dbReference type="TreeFam" id="TF314697"/>
<dbReference type="Reactome" id="R-BTA-69273">
    <property type="pathway name" value="Cyclin A/B1/B2 associated events during G2/M transition"/>
</dbReference>
<dbReference type="Proteomes" id="UP000009136">
    <property type="component" value="Chromosome 15"/>
</dbReference>
<dbReference type="Bgee" id="ENSBTAG00000027612">
    <property type="expression patterns" value="Expressed in oocyte and 105 other cell types or tissues"/>
</dbReference>
<dbReference type="GO" id="GO:0051722">
    <property type="term" value="F:protein C-terminal methylesterase activity"/>
    <property type="evidence" value="ECO:0000250"/>
    <property type="project" value="UniProtKB"/>
</dbReference>
<dbReference type="GO" id="GO:0051721">
    <property type="term" value="F:protein phosphatase 2A binding"/>
    <property type="evidence" value="ECO:0000250"/>
    <property type="project" value="UniProtKB"/>
</dbReference>
<dbReference type="Gene3D" id="3.40.50.1820">
    <property type="entry name" value="alpha/beta hydrolase"/>
    <property type="match status" value="1"/>
</dbReference>
<dbReference type="InterPro" id="IPR000073">
    <property type="entry name" value="AB_hydrolase_1"/>
</dbReference>
<dbReference type="InterPro" id="IPR029058">
    <property type="entry name" value="AB_hydrolase_fold"/>
</dbReference>
<dbReference type="InterPro" id="IPR000639">
    <property type="entry name" value="Epox_hydrolase-like"/>
</dbReference>
<dbReference type="InterPro" id="IPR016812">
    <property type="entry name" value="PPase_methylesterase_euk"/>
</dbReference>
<dbReference type="PANTHER" id="PTHR14189:SF0">
    <property type="entry name" value="PROTEIN PHOSPHATASE METHYLESTERASE 1"/>
    <property type="match status" value="1"/>
</dbReference>
<dbReference type="PANTHER" id="PTHR14189">
    <property type="entry name" value="PROTEIN PHOSPHATASE METHYLESTERASE-1 RELATED"/>
    <property type="match status" value="1"/>
</dbReference>
<dbReference type="Pfam" id="PF12697">
    <property type="entry name" value="Abhydrolase_6"/>
    <property type="match status" value="1"/>
</dbReference>
<dbReference type="PIRSF" id="PIRSF022950">
    <property type="entry name" value="PPase_methylesterase_euk"/>
    <property type="match status" value="1"/>
</dbReference>
<dbReference type="PRINTS" id="PR00111">
    <property type="entry name" value="ABHYDROLASE"/>
</dbReference>
<dbReference type="PRINTS" id="PR00412">
    <property type="entry name" value="EPOXHYDRLASE"/>
</dbReference>
<dbReference type="SUPFAM" id="SSF53474">
    <property type="entry name" value="alpha/beta-Hydrolases"/>
    <property type="match status" value="1"/>
</dbReference>
<dbReference type="PROSITE" id="PS00120">
    <property type="entry name" value="LIPASE_SER"/>
    <property type="match status" value="1"/>
</dbReference>
<comment type="function">
    <text evidence="1">Demethylates proteins that have been reversibly carboxymethylated. Demethylates PPP2CB (in vitro) and PPP2CA. Binding to PPP2CA displaces the manganese ion and inactivates the enzyme (By similarity).</text>
</comment>
<comment type="catalytic activity">
    <reaction>
        <text>[phosphatase 2A protein]-C-terminal L-leucine methyl ester + H2O = [phosphatase 2A protein]-C-terminal L-leucine + methanol + H(+)</text>
        <dbReference type="Rhea" id="RHEA:48548"/>
        <dbReference type="Rhea" id="RHEA-COMP:12134"/>
        <dbReference type="Rhea" id="RHEA-COMP:12135"/>
        <dbReference type="ChEBI" id="CHEBI:15377"/>
        <dbReference type="ChEBI" id="CHEBI:15378"/>
        <dbReference type="ChEBI" id="CHEBI:17790"/>
        <dbReference type="ChEBI" id="CHEBI:90516"/>
        <dbReference type="ChEBI" id="CHEBI:90517"/>
        <dbReference type="EC" id="3.1.1.89"/>
    </reaction>
</comment>
<comment type="subunit">
    <text evidence="1">Binds PPP2CA and PPP2CB.</text>
</comment>
<comment type="PTM">
    <text evidence="1">Phosphorylated by SIK1 following increases in intracellular sodium, leading to dissociation from the protein phosphatase 2A (PP2A) complex and subsequent dephosphorylation of sodium/potassium-transporting ATPase ATP1A1.</text>
</comment>
<comment type="similarity">
    <text evidence="5">Belongs to the AB hydrolase superfamily.</text>
</comment>
<evidence type="ECO:0000250" key="1"/>
<evidence type="ECO:0000250" key="2">
    <source>
        <dbReference type="UniProtKB" id="Q8BVQ5"/>
    </source>
</evidence>
<evidence type="ECO:0000250" key="3">
    <source>
        <dbReference type="UniProtKB" id="Q9Y570"/>
    </source>
</evidence>
<evidence type="ECO:0000256" key="4">
    <source>
        <dbReference type="SAM" id="MobiDB-lite"/>
    </source>
</evidence>
<evidence type="ECO:0000305" key="5"/>